<organism>
    <name type="scientific">Zymoseptoria tritici</name>
    <name type="common">Speckled leaf blotch fungus</name>
    <name type="synonym">Septoria tritici</name>
    <dbReference type="NCBI Taxonomy" id="1047171"/>
    <lineage>
        <taxon>Eukaryota</taxon>
        <taxon>Fungi</taxon>
        <taxon>Dikarya</taxon>
        <taxon>Ascomycota</taxon>
        <taxon>Pezizomycotina</taxon>
        <taxon>Dothideomycetes</taxon>
        <taxon>Dothideomycetidae</taxon>
        <taxon>Mycosphaerellales</taxon>
        <taxon>Mycosphaerellaceae</taxon>
        <taxon>Zymoseptoria</taxon>
    </lineage>
</organism>
<comment type="function">
    <text evidence="3">Component of the ubiquinol-cytochrome c reductase complex (complex III or cytochrome b-c1 complex) that is part of the mitochondrial respiratory chain. The b-c1 complex mediates electron transfer from ubiquinol to cytochrome c. Contributes to the generation of a proton gradient across the mitochondrial membrane that is then used for ATP synthesis.</text>
</comment>
<comment type="cofactor">
    <cofactor evidence="3">
        <name>heme b</name>
        <dbReference type="ChEBI" id="CHEBI:60344"/>
    </cofactor>
    <text evidence="3">Binds 2 heme b groups non-covalently.</text>
</comment>
<comment type="subunit">
    <text evidence="3">Fungal cytochrome b-c1 complex contains 10 subunits; 3 respiratory subunits, 2 core proteins and 5 low-molecular weight proteins. Cytochrome b-c1 complex is a homodimer.</text>
</comment>
<comment type="subcellular location">
    <subcellularLocation>
        <location evidence="3">Mitochondrion inner membrane</location>
        <topology evidence="3">Multi-pass membrane protein</topology>
    </subcellularLocation>
</comment>
<comment type="miscellaneous">
    <text evidence="1">Heme 1 (or BL or b562) is low-potential and absorbs at about 562 nm, and heme 2 (or BH or b566) is high-potential and absorbs at about 566 nm.</text>
</comment>
<comment type="similarity">
    <text evidence="4 5">Belongs to the cytochrome b family.</text>
</comment>
<comment type="caution">
    <text evidence="3">The protein contains only eight transmembrane helices, not nine as predicted by bioinformatics tools.</text>
</comment>
<reference key="1">
    <citation type="submission" date="2003-03" db="EMBL/GenBank/DDBJ databases">
        <title>Detection of resistance to stobilurin fungicides in Septoria tritici.</title>
        <authorList>
            <person name="Cools H.J."/>
            <person name="Fraaije B.A."/>
        </authorList>
    </citation>
    <scope>NUCLEOTIDE SEQUENCE [GENOMIC DNA]</scope>
    <source>
        <strain>ST1/MBC</strain>
    </source>
</reference>
<sequence>MRIWKSHPLFSLVNGYLIDSPQPSNLSYLWNFGSLLGFCLVIQIVTGVTLAMHYNPSVSEAFNSVEHIMRDVNNGWLIRYLHSNTASAFFFLVYLHVGRGLYYGSYKAPRTLTWTIGTIILVLMMATAFLGYVLPYGQMSLWGATVITNLLSAIPWVGQDIVEFVWGGFSVNNATLNRFFALHFVLPFVLAALVLMHLIALHDTAGSGNPLGVSGNYDRLPFAPYFIFKDLITIFLFIIVLSIFIFFMPNVLGDSENYVMANPMQTPPAIVPEWYLLPFYAILRSIPNKLLGVIAMFSAILIIMIMPITDLGRSRGLQFRPLSKITFYIFVANFLVLMQLGANHVESPFIEFGQISTVLYFSHFLIIVPLVSLIENTLVDMHLNNTIT</sequence>
<proteinExistence type="inferred from homology"/>
<protein>
    <recommendedName>
        <fullName>Cytochrome b</fullName>
    </recommendedName>
    <alternativeName>
        <fullName>Complex III subunit 3</fullName>
    </alternativeName>
    <alternativeName>
        <fullName>Complex III subunit III</fullName>
    </alternativeName>
    <alternativeName>
        <fullName>Cytochrome b-c1 complex subunit 3</fullName>
    </alternativeName>
    <alternativeName>
        <fullName>Ubiquinol-cytochrome-c reductase complex cytochrome b subunit</fullName>
    </alternativeName>
</protein>
<dbReference type="EMBL" id="AY247413">
    <property type="protein sequence ID" value="AAP81933.1"/>
    <property type="molecule type" value="Genomic_DNA"/>
</dbReference>
<dbReference type="SMR" id="Q6X9S4"/>
<dbReference type="PHI-base" id="PHI:835"/>
<dbReference type="GO" id="GO:0005743">
    <property type="term" value="C:mitochondrial inner membrane"/>
    <property type="evidence" value="ECO:0007669"/>
    <property type="project" value="UniProtKB-SubCell"/>
</dbReference>
<dbReference type="GO" id="GO:0045275">
    <property type="term" value="C:respiratory chain complex III"/>
    <property type="evidence" value="ECO:0007669"/>
    <property type="project" value="InterPro"/>
</dbReference>
<dbReference type="GO" id="GO:0046872">
    <property type="term" value="F:metal ion binding"/>
    <property type="evidence" value="ECO:0007669"/>
    <property type="project" value="UniProtKB-KW"/>
</dbReference>
<dbReference type="GO" id="GO:0008121">
    <property type="term" value="F:ubiquinol-cytochrome-c reductase activity"/>
    <property type="evidence" value="ECO:0007669"/>
    <property type="project" value="InterPro"/>
</dbReference>
<dbReference type="GO" id="GO:0006122">
    <property type="term" value="P:mitochondrial electron transport, ubiquinol to cytochrome c"/>
    <property type="evidence" value="ECO:0007669"/>
    <property type="project" value="TreeGrafter"/>
</dbReference>
<dbReference type="CDD" id="cd00290">
    <property type="entry name" value="cytochrome_b_C"/>
    <property type="match status" value="1"/>
</dbReference>
<dbReference type="CDD" id="cd00284">
    <property type="entry name" value="Cytochrome_b_N"/>
    <property type="match status" value="1"/>
</dbReference>
<dbReference type="FunFam" id="1.20.810.10:FF:000002">
    <property type="entry name" value="Cytochrome b"/>
    <property type="match status" value="1"/>
</dbReference>
<dbReference type="Gene3D" id="1.20.810.10">
    <property type="entry name" value="Cytochrome Bc1 Complex, Chain C"/>
    <property type="match status" value="1"/>
</dbReference>
<dbReference type="InterPro" id="IPR005798">
    <property type="entry name" value="Cyt_b/b6_C"/>
</dbReference>
<dbReference type="InterPro" id="IPR036150">
    <property type="entry name" value="Cyt_b/b6_C_sf"/>
</dbReference>
<dbReference type="InterPro" id="IPR005797">
    <property type="entry name" value="Cyt_b/b6_N"/>
</dbReference>
<dbReference type="InterPro" id="IPR027387">
    <property type="entry name" value="Cytb/b6-like_sf"/>
</dbReference>
<dbReference type="InterPro" id="IPR030689">
    <property type="entry name" value="Cytochrome_b"/>
</dbReference>
<dbReference type="InterPro" id="IPR048260">
    <property type="entry name" value="Cytochrome_b_C_euk/bac"/>
</dbReference>
<dbReference type="InterPro" id="IPR048259">
    <property type="entry name" value="Cytochrome_b_N_euk/bac"/>
</dbReference>
<dbReference type="InterPro" id="IPR016174">
    <property type="entry name" value="Di-haem_cyt_TM"/>
</dbReference>
<dbReference type="PANTHER" id="PTHR19271">
    <property type="entry name" value="CYTOCHROME B"/>
    <property type="match status" value="1"/>
</dbReference>
<dbReference type="PANTHER" id="PTHR19271:SF16">
    <property type="entry name" value="CYTOCHROME B"/>
    <property type="match status" value="1"/>
</dbReference>
<dbReference type="Pfam" id="PF00032">
    <property type="entry name" value="Cytochrom_B_C"/>
    <property type="match status" value="1"/>
</dbReference>
<dbReference type="Pfam" id="PF00033">
    <property type="entry name" value="Cytochrome_B"/>
    <property type="match status" value="1"/>
</dbReference>
<dbReference type="PIRSF" id="PIRSF038885">
    <property type="entry name" value="COB"/>
    <property type="match status" value="1"/>
</dbReference>
<dbReference type="SUPFAM" id="SSF81648">
    <property type="entry name" value="a domain/subunit of cytochrome bc1 complex (Ubiquinol-cytochrome c reductase)"/>
    <property type="match status" value="1"/>
</dbReference>
<dbReference type="SUPFAM" id="SSF81342">
    <property type="entry name" value="Transmembrane di-heme cytochromes"/>
    <property type="match status" value="1"/>
</dbReference>
<dbReference type="PROSITE" id="PS51003">
    <property type="entry name" value="CYTB_CTER"/>
    <property type="match status" value="1"/>
</dbReference>
<dbReference type="PROSITE" id="PS51002">
    <property type="entry name" value="CYTB_NTER"/>
    <property type="match status" value="1"/>
</dbReference>
<keyword id="KW-0249">Electron transport</keyword>
<keyword id="KW-0349">Heme</keyword>
<keyword id="KW-0408">Iron</keyword>
<keyword id="KW-0472">Membrane</keyword>
<keyword id="KW-0479">Metal-binding</keyword>
<keyword id="KW-0496">Mitochondrion</keyword>
<keyword id="KW-0999">Mitochondrion inner membrane</keyword>
<keyword id="KW-0679">Respiratory chain</keyword>
<keyword id="KW-0812">Transmembrane</keyword>
<keyword id="KW-1133">Transmembrane helix</keyword>
<keyword id="KW-0813">Transport</keyword>
<keyword id="KW-0830">Ubiquinone</keyword>
<geneLocation type="mitochondrion"/>
<evidence type="ECO:0000250" key="1"/>
<evidence type="ECO:0000250" key="2">
    <source>
        <dbReference type="UniProtKB" id="P00157"/>
    </source>
</evidence>
<evidence type="ECO:0000250" key="3">
    <source>
        <dbReference type="UniProtKB" id="P00163"/>
    </source>
</evidence>
<evidence type="ECO:0000255" key="4">
    <source>
        <dbReference type="PROSITE-ProRule" id="PRU00967"/>
    </source>
</evidence>
<evidence type="ECO:0000255" key="5">
    <source>
        <dbReference type="PROSITE-ProRule" id="PRU00968"/>
    </source>
</evidence>
<gene>
    <name type="primary">cob</name>
    <name type="synonym">cytB</name>
</gene>
<name>CYB_ZYMTR</name>
<feature type="chain" id="PRO_0000061747" description="Cytochrome b">
    <location>
        <begin position="1"/>
        <end position="388"/>
    </location>
</feature>
<feature type="transmembrane region" description="Helical" evidence="3">
    <location>
        <begin position="32"/>
        <end position="52"/>
    </location>
</feature>
<feature type="transmembrane region" description="Helical" evidence="3">
    <location>
        <begin position="76"/>
        <end position="98"/>
    </location>
</feature>
<feature type="transmembrane region" description="Helical" evidence="3">
    <location>
        <begin position="113"/>
        <end position="133"/>
    </location>
</feature>
<feature type="transmembrane region" description="Helical" evidence="3">
    <location>
        <begin position="179"/>
        <end position="199"/>
    </location>
</feature>
<feature type="transmembrane region" description="Helical" evidence="3">
    <location>
        <begin position="226"/>
        <end position="246"/>
    </location>
</feature>
<feature type="transmembrane region" description="Helical" evidence="3">
    <location>
        <begin position="290"/>
        <end position="310"/>
    </location>
</feature>
<feature type="transmembrane region" description="Helical" evidence="3">
    <location>
        <begin position="322"/>
        <end position="342"/>
    </location>
</feature>
<feature type="transmembrane region" description="Helical" evidence="3">
    <location>
        <begin position="349"/>
        <end position="369"/>
    </location>
</feature>
<feature type="binding site" description="axial binding residue" evidence="5">
    <location>
        <position position="82"/>
    </location>
    <ligand>
        <name>heme b</name>
        <dbReference type="ChEBI" id="CHEBI:60344"/>
        <label>b562</label>
    </ligand>
    <ligandPart>
        <name>Fe</name>
        <dbReference type="ChEBI" id="CHEBI:18248"/>
    </ligandPart>
</feature>
<feature type="binding site" description="axial binding residue" evidence="5">
    <location>
        <position position="96"/>
    </location>
    <ligand>
        <name>heme b</name>
        <dbReference type="ChEBI" id="CHEBI:60344"/>
        <label>b566</label>
    </ligand>
    <ligandPart>
        <name>Fe</name>
        <dbReference type="ChEBI" id="CHEBI:18248"/>
    </ligandPart>
</feature>
<feature type="binding site" description="axial binding residue" evidence="5">
    <location>
        <position position="183"/>
    </location>
    <ligand>
        <name>heme b</name>
        <dbReference type="ChEBI" id="CHEBI:60344"/>
        <label>b562</label>
    </ligand>
    <ligandPart>
        <name>Fe</name>
        <dbReference type="ChEBI" id="CHEBI:18248"/>
    </ligandPart>
</feature>
<feature type="binding site" description="axial binding residue" evidence="5">
    <location>
        <position position="197"/>
    </location>
    <ligand>
        <name>heme b</name>
        <dbReference type="ChEBI" id="CHEBI:60344"/>
        <label>b566</label>
    </ligand>
    <ligandPart>
        <name>Fe</name>
        <dbReference type="ChEBI" id="CHEBI:18248"/>
    </ligandPart>
</feature>
<feature type="binding site" evidence="2">
    <location>
        <position position="202"/>
    </location>
    <ligand>
        <name>a ubiquinone</name>
        <dbReference type="ChEBI" id="CHEBI:16389"/>
    </ligand>
</feature>
<accession>Q6X9S4</accession>